<name>VKT16_DRYCN</name>
<evidence type="ECO:0000250" key="1"/>
<evidence type="ECO:0000255" key="2"/>
<evidence type="ECO:0000255" key="3">
    <source>
        <dbReference type="PROSITE-ProRule" id="PRU00031"/>
    </source>
</evidence>
<evidence type="ECO:0000305" key="4"/>
<feature type="signal peptide" evidence="2">
    <location>
        <begin position="1"/>
        <end position="24"/>
    </location>
</feature>
<feature type="chain" id="PRO_0000425518" description="Kunitz-type serine protease inhibitor 161">
    <location>
        <begin position="25"/>
        <end position="83"/>
    </location>
</feature>
<feature type="domain" description="BPTI/Kunitz inhibitor" evidence="3">
    <location>
        <begin position="31"/>
        <end position="81"/>
    </location>
</feature>
<feature type="site" description="Reactive bond for trypsin" evidence="1">
    <location>
        <begin position="41"/>
        <end position="42"/>
    </location>
</feature>
<feature type="disulfide bond" evidence="3">
    <location>
        <begin position="31"/>
        <end position="81"/>
    </location>
</feature>
<feature type="disulfide bond" evidence="3">
    <location>
        <begin position="40"/>
        <end position="64"/>
    </location>
</feature>
<feature type="disulfide bond" evidence="3">
    <location>
        <begin position="56"/>
        <end position="77"/>
    </location>
</feature>
<sequence length="83" mass="9120">MSSGGLLLLLGLLTLWAELTPVSSKDRPDFCHLPADSGSCKGNFQAFYYHPVHRTCLEFIYGGCEGNANNFKTMDECKRTCAA</sequence>
<dbReference type="EMBL" id="FJ752472">
    <property type="protein sequence ID" value="ACR78494.1"/>
    <property type="molecule type" value="mRNA"/>
</dbReference>
<dbReference type="SMR" id="F8J2F4"/>
<dbReference type="MEROPS" id="I02.052"/>
<dbReference type="GO" id="GO:0005615">
    <property type="term" value="C:extracellular space"/>
    <property type="evidence" value="ECO:0007669"/>
    <property type="project" value="TreeGrafter"/>
</dbReference>
<dbReference type="GO" id="GO:0004867">
    <property type="term" value="F:serine-type endopeptidase inhibitor activity"/>
    <property type="evidence" value="ECO:0007669"/>
    <property type="project" value="UniProtKB-KW"/>
</dbReference>
<dbReference type="CDD" id="cd22594">
    <property type="entry name" value="Kunitz_textilinin-like"/>
    <property type="match status" value="1"/>
</dbReference>
<dbReference type="FunFam" id="4.10.410.10:FF:000021">
    <property type="entry name" value="Serine protease inhibitor, putative"/>
    <property type="match status" value="1"/>
</dbReference>
<dbReference type="Gene3D" id="4.10.410.10">
    <property type="entry name" value="Pancreatic trypsin inhibitor Kunitz domain"/>
    <property type="match status" value="1"/>
</dbReference>
<dbReference type="InterPro" id="IPR002223">
    <property type="entry name" value="Kunitz_BPTI"/>
</dbReference>
<dbReference type="InterPro" id="IPR036880">
    <property type="entry name" value="Kunitz_BPTI_sf"/>
</dbReference>
<dbReference type="InterPro" id="IPR020901">
    <property type="entry name" value="Prtase_inh_Kunz-CS"/>
</dbReference>
<dbReference type="InterPro" id="IPR050098">
    <property type="entry name" value="TFPI/VKTCI-like"/>
</dbReference>
<dbReference type="PANTHER" id="PTHR10083:SF374">
    <property type="entry name" value="BPTI_KUNITZ INHIBITOR DOMAIN-CONTAINING PROTEIN"/>
    <property type="match status" value="1"/>
</dbReference>
<dbReference type="PANTHER" id="PTHR10083">
    <property type="entry name" value="KUNITZ-TYPE PROTEASE INHIBITOR-RELATED"/>
    <property type="match status" value="1"/>
</dbReference>
<dbReference type="Pfam" id="PF00014">
    <property type="entry name" value="Kunitz_BPTI"/>
    <property type="match status" value="1"/>
</dbReference>
<dbReference type="PRINTS" id="PR00759">
    <property type="entry name" value="BASICPTASE"/>
</dbReference>
<dbReference type="SMART" id="SM00131">
    <property type="entry name" value="KU"/>
    <property type="match status" value="1"/>
</dbReference>
<dbReference type="SUPFAM" id="SSF57362">
    <property type="entry name" value="BPTI-like"/>
    <property type="match status" value="1"/>
</dbReference>
<dbReference type="PROSITE" id="PS00280">
    <property type="entry name" value="BPTI_KUNITZ_1"/>
    <property type="match status" value="1"/>
</dbReference>
<dbReference type="PROSITE" id="PS50279">
    <property type="entry name" value="BPTI_KUNITZ_2"/>
    <property type="match status" value="1"/>
</dbReference>
<keyword id="KW-1015">Disulfide bond</keyword>
<keyword id="KW-0646">Protease inhibitor</keyword>
<keyword id="KW-0964">Secreted</keyword>
<keyword id="KW-0722">Serine protease inhibitor</keyword>
<keyword id="KW-0732">Signal</keyword>
<comment type="function">
    <text evidence="1">Serine protease inhibitor.</text>
</comment>
<comment type="subcellular location">
    <subcellularLocation>
        <location>Secreted</location>
    </subcellularLocation>
</comment>
<comment type="tissue specificity">
    <text>Expressed by the venom gland.</text>
</comment>
<comment type="similarity">
    <text evidence="4">Belongs to the venom Kunitz-type family.</text>
</comment>
<reference key="1">
    <citation type="journal article" date="2011" name="J. Proteome Res.">
        <title>Identification of novel proteins from the venom of a cryptic snake Drysdalia coronoides by a combined transcriptomics and proteomics approach.</title>
        <authorList>
            <person name="Chatrath S.T."/>
            <person name="Chapeaurouge A."/>
            <person name="Lin Q."/>
            <person name="Lim T.K."/>
            <person name="Dunstan N."/>
            <person name="Mirtschin P."/>
            <person name="Kumar P.P."/>
            <person name="Kini R.M."/>
        </authorList>
    </citation>
    <scope>NUCLEOTIDE SEQUENCE [MRNA]</scope>
    <scope>IDENTIFICATION BY MASS SPECTROMETRY</scope>
    <source>
        <tissue>Venom</tissue>
        <tissue>Venom gland</tissue>
    </source>
</reference>
<protein>
    <recommendedName>
        <fullName>Kunitz-type serine protease inhibitor 161</fullName>
        <shortName>SPI-161</shortName>
    </recommendedName>
</protein>
<accession>F8J2F4</accession>
<proteinExistence type="evidence at protein level"/>
<organism>
    <name type="scientific">Drysdalia coronoides</name>
    <name type="common">White-lipped snake</name>
    <name type="synonym">Hoplocephalus coronoides</name>
    <dbReference type="NCBI Taxonomy" id="66186"/>
    <lineage>
        <taxon>Eukaryota</taxon>
        <taxon>Metazoa</taxon>
        <taxon>Chordata</taxon>
        <taxon>Craniata</taxon>
        <taxon>Vertebrata</taxon>
        <taxon>Euteleostomi</taxon>
        <taxon>Lepidosauria</taxon>
        <taxon>Squamata</taxon>
        <taxon>Bifurcata</taxon>
        <taxon>Unidentata</taxon>
        <taxon>Episquamata</taxon>
        <taxon>Toxicofera</taxon>
        <taxon>Serpentes</taxon>
        <taxon>Colubroidea</taxon>
        <taxon>Elapidae</taxon>
        <taxon>Notechinae</taxon>
        <taxon>Drysdalia</taxon>
    </lineage>
</organism>